<comment type="function">
    <text evidence="1">Part of the outer membrane protein assembly complex, which is involved in assembly and insertion of beta-barrel proteins into the outer membrane.</text>
</comment>
<comment type="subunit">
    <text evidence="1">Part of the Bam complex.</text>
</comment>
<comment type="subcellular location">
    <subcellularLocation>
        <location evidence="1">Cell outer membrane</location>
        <topology evidence="1">Lipid-anchor</topology>
    </subcellularLocation>
</comment>
<comment type="similarity">
    <text evidence="1">Belongs to the BamB family.</text>
</comment>
<reference key="1">
    <citation type="submission" date="2006-08" db="EMBL/GenBank/DDBJ databases">
        <title>Complete sequence of Alkalilimnicola ehrilichei MLHE-1.</title>
        <authorList>
            <person name="Copeland A."/>
            <person name="Lucas S."/>
            <person name="Lapidus A."/>
            <person name="Barry K."/>
            <person name="Detter J.C."/>
            <person name="Glavina del Rio T."/>
            <person name="Hammon N."/>
            <person name="Israni S."/>
            <person name="Dalin E."/>
            <person name="Tice H."/>
            <person name="Pitluck S."/>
            <person name="Sims D."/>
            <person name="Brettin T."/>
            <person name="Bruce D."/>
            <person name="Han C."/>
            <person name="Tapia R."/>
            <person name="Gilna P."/>
            <person name="Schmutz J."/>
            <person name="Larimer F."/>
            <person name="Land M."/>
            <person name="Hauser L."/>
            <person name="Kyrpides N."/>
            <person name="Mikhailova N."/>
            <person name="Oremland R.S."/>
            <person name="Hoeft S.E."/>
            <person name="Switzer-Blum J."/>
            <person name="Kulp T."/>
            <person name="King G."/>
            <person name="Tabita R."/>
            <person name="Witte B."/>
            <person name="Santini J.M."/>
            <person name="Basu P."/>
            <person name="Hollibaugh J.T."/>
            <person name="Xie G."/>
            <person name="Stolz J.F."/>
            <person name="Richardson P."/>
        </authorList>
    </citation>
    <scope>NUCLEOTIDE SEQUENCE [LARGE SCALE GENOMIC DNA]</scope>
    <source>
        <strain>ATCC BAA-1101 / DSM 17681 / MLHE-1</strain>
    </source>
</reference>
<proteinExistence type="inferred from homology"/>
<gene>
    <name evidence="1" type="primary">bamB</name>
    <name type="ordered locus">Mlg_1254</name>
</gene>
<evidence type="ECO:0000255" key="1">
    <source>
        <dbReference type="HAMAP-Rule" id="MF_00923"/>
    </source>
</evidence>
<organism>
    <name type="scientific">Alkalilimnicola ehrlichii (strain ATCC BAA-1101 / DSM 17681 / MLHE-1)</name>
    <dbReference type="NCBI Taxonomy" id="187272"/>
    <lineage>
        <taxon>Bacteria</taxon>
        <taxon>Pseudomonadati</taxon>
        <taxon>Pseudomonadota</taxon>
        <taxon>Gammaproteobacteria</taxon>
        <taxon>Chromatiales</taxon>
        <taxon>Ectothiorhodospiraceae</taxon>
        <taxon>Alkalilimnicola</taxon>
    </lineage>
</organism>
<sequence>MMLLKRCNRRALVALAAVLLLAACGGARELPDLSDVGDGVATETLWTASTGSGSASSAYALVPAVEGGRVYAADSNGRVTAWDAESGERLWRVDTGRELAAGPGAGGGLVLVGARDGRLLALDAENGEERWVSGLSSEILAVPQIARNIVVARSGDGRVYGLDGLTGRRLWIHDRSVPVLTLRGSSSPVVVGNRVVVGQDNGRLVTLNLQDGEVIWEAPVSIPRGRSDLERMVDLHADPLVFRGVAYAQAYQGELAAVGMGDGRERWSRDIPGHTGMAADSRQLYVVDDQSRLWALDRNNGATVWRQDRLQGLRLTAPVVIGGHLVLADEEGYLNWIAPDNGDLVGRDRHGRQPIQRPPVPDGDVLYLLSADGRLAALRLVED</sequence>
<name>BAMB_ALKEH</name>
<keyword id="KW-0998">Cell outer membrane</keyword>
<keyword id="KW-0449">Lipoprotein</keyword>
<keyword id="KW-0472">Membrane</keyword>
<keyword id="KW-0564">Palmitate</keyword>
<keyword id="KW-1185">Reference proteome</keyword>
<keyword id="KW-0732">Signal</keyword>
<dbReference type="EMBL" id="CP000453">
    <property type="protein sequence ID" value="ABI56603.1"/>
    <property type="molecule type" value="Genomic_DNA"/>
</dbReference>
<dbReference type="SMR" id="Q0A984"/>
<dbReference type="KEGG" id="aeh:Mlg_1254"/>
<dbReference type="eggNOG" id="COG1520">
    <property type="taxonomic scope" value="Bacteria"/>
</dbReference>
<dbReference type="HOGENOM" id="CLU_027480_0_1_6"/>
<dbReference type="OrthoDB" id="5173551at2"/>
<dbReference type="Proteomes" id="UP000001962">
    <property type="component" value="Chromosome"/>
</dbReference>
<dbReference type="GO" id="GO:0009279">
    <property type="term" value="C:cell outer membrane"/>
    <property type="evidence" value="ECO:0007669"/>
    <property type="project" value="UniProtKB-SubCell"/>
</dbReference>
<dbReference type="GO" id="GO:0043165">
    <property type="term" value="P:Gram-negative-bacterium-type cell outer membrane assembly"/>
    <property type="evidence" value="ECO:0007669"/>
    <property type="project" value="UniProtKB-UniRule"/>
</dbReference>
<dbReference type="GO" id="GO:0051205">
    <property type="term" value="P:protein insertion into membrane"/>
    <property type="evidence" value="ECO:0007669"/>
    <property type="project" value="UniProtKB-UniRule"/>
</dbReference>
<dbReference type="Gene3D" id="2.130.10.10">
    <property type="entry name" value="YVTN repeat-like/Quinoprotein amine dehydrogenase"/>
    <property type="match status" value="1"/>
</dbReference>
<dbReference type="HAMAP" id="MF_00923">
    <property type="entry name" value="OM_assembly_BamB"/>
    <property type="match status" value="1"/>
</dbReference>
<dbReference type="InterPro" id="IPR017687">
    <property type="entry name" value="BamB"/>
</dbReference>
<dbReference type="InterPro" id="IPR018391">
    <property type="entry name" value="PQQ_b-propeller_rpt"/>
</dbReference>
<dbReference type="InterPro" id="IPR002372">
    <property type="entry name" value="PQQ_rpt_dom"/>
</dbReference>
<dbReference type="InterPro" id="IPR011047">
    <property type="entry name" value="Quinoprotein_ADH-like_sf"/>
</dbReference>
<dbReference type="InterPro" id="IPR015943">
    <property type="entry name" value="WD40/YVTN_repeat-like_dom_sf"/>
</dbReference>
<dbReference type="NCBIfam" id="TIGR03300">
    <property type="entry name" value="assembly_YfgL"/>
    <property type="match status" value="1"/>
</dbReference>
<dbReference type="PANTHER" id="PTHR34512">
    <property type="entry name" value="CELL SURFACE PROTEIN"/>
    <property type="match status" value="1"/>
</dbReference>
<dbReference type="PANTHER" id="PTHR34512:SF30">
    <property type="entry name" value="OUTER MEMBRANE PROTEIN ASSEMBLY FACTOR BAMB"/>
    <property type="match status" value="1"/>
</dbReference>
<dbReference type="Pfam" id="PF13360">
    <property type="entry name" value="PQQ_2"/>
    <property type="match status" value="1"/>
</dbReference>
<dbReference type="SMART" id="SM00564">
    <property type="entry name" value="PQQ"/>
    <property type="match status" value="6"/>
</dbReference>
<dbReference type="SUPFAM" id="SSF50998">
    <property type="entry name" value="Quinoprotein alcohol dehydrogenase-like"/>
    <property type="match status" value="1"/>
</dbReference>
<dbReference type="PROSITE" id="PS51257">
    <property type="entry name" value="PROKAR_LIPOPROTEIN"/>
    <property type="match status" value="1"/>
</dbReference>
<feature type="signal peptide" evidence="1">
    <location>
        <begin position="1"/>
        <end position="23"/>
    </location>
</feature>
<feature type="chain" id="PRO_5000132841" description="Outer membrane protein assembly factor BamB">
    <location>
        <begin position="24"/>
        <end position="383"/>
    </location>
</feature>
<feature type="lipid moiety-binding region" description="N-palmitoyl cysteine" evidence="1">
    <location>
        <position position="24"/>
    </location>
</feature>
<feature type="lipid moiety-binding region" description="S-diacylglycerol cysteine" evidence="1">
    <location>
        <position position="24"/>
    </location>
</feature>
<protein>
    <recommendedName>
        <fullName evidence="1">Outer membrane protein assembly factor BamB</fullName>
    </recommendedName>
</protein>
<accession>Q0A984</accession>